<accession>B3H337</accession>
<reference key="1">
    <citation type="submission" date="2008-06" db="EMBL/GenBank/DDBJ databases">
        <title>Genome and proteome analysis of A. pleuropneumoniae serotype 7.</title>
        <authorList>
            <person name="Linke B."/>
            <person name="Buettner F."/>
            <person name="Martinez-Arias R."/>
            <person name="Goesmann A."/>
            <person name="Baltes N."/>
            <person name="Tegetmeyer H."/>
            <person name="Singh M."/>
            <person name="Gerlach G.F."/>
        </authorList>
    </citation>
    <scope>NUCLEOTIDE SEQUENCE [LARGE SCALE GENOMIC DNA]</scope>
    <source>
        <strain>AP76</strain>
    </source>
</reference>
<dbReference type="EMBL" id="CP001091">
    <property type="protein sequence ID" value="ACE62707.1"/>
    <property type="molecule type" value="Genomic_DNA"/>
</dbReference>
<dbReference type="RefSeq" id="WP_005620316.1">
    <property type="nucleotide sequence ID" value="NC_010939.1"/>
</dbReference>
<dbReference type="SMR" id="B3H337"/>
<dbReference type="GeneID" id="48600268"/>
<dbReference type="KEGG" id="apa:APP7_2055"/>
<dbReference type="HOGENOM" id="CLU_069356_5_0_6"/>
<dbReference type="Proteomes" id="UP000001226">
    <property type="component" value="Chromosome"/>
</dbReference>
<dbReference type="GO" id="GO:0043590">
    <property type="term" value="C:bacterial nucleoid"/>
    <property type="evidence" value="ECO:0007669"/>
    <property type="project" value="UniProtKB-UniRule"/>
</dbReference>
<dbReference type="GO" id="GO:0005737">
    <property type="term" value="C:cytoplasm"/>
    <property type="evidence" value="ECO:0007669"/>
    <property type="project" value="UniProtKB-UniRule"/>
</dbReference>
<dbReference type="GO" id="GO:0043565">
    <property type="term" value="F:sequence-specific DNA binding"/>
    <property type="evidence" value="ECO:0007669"/>
    <property type="project" value="UniProtKB-UniRule"/>
</dbReference>
<dbReference type="GO" id="GO:0051301">
    <property type="term" value="P:cell division"/>
    <property type="evidence" value="ECO:0007669"/>
    <property type="project" value="UniProtKB-KW"/>
</dbReference>
<dbReference type="GO" id="GO:0010974">
    <property type="term" value="P:negative regulation of division septum assembly"/>
    <property type="evidence" value="ECO:0007669"/>
    <property type="project" value="InterPro"/>
</dbReference>
<dbReference type="Gene3D" id="1.10.357.10">
    <property type="entry name" value="Tetracycline Repressor, domain 2"/>
    <property type="match status" value="1"/>
</dbReference>
<dbReference type="HAMAP" id="MF_01839">
    <property type="entry name" value="NO_factor_SlmA"/>
    <property type="match status" value="1"/>
</dbReference>
<dbReference type="InterPro" id="IPR023772">
    <property type="entry name" value="DNA-bd_HTH_TetR-type_CS"/>
</dbReference>
<dbReference type="InterPro" id="IPR009057">
    <property type="entry name" value="Homeodomain-like_sf"/>
</dbReference>
<dbReference type="InterPro" id="IPR050624">
    <property type="entry name" value="HTH-type_Tx_Regulator"/>
</dbReference>
<dbReference type="InterPro" id="IPR001647">
    <property type="entry name" value="HTH_TetR"/>
</dbReference>
<dbReference type="InterPro" id="IPR023769">
    <property type="entry name" value="NO_SlmA"/>
</dbReference>
<dbReference type="InterPro" id="IPR054580">
    <property type="entry name" value="SlmA-like_C"/>
</dbReference>
<dbReference type="NCBIfam" id="NF007015">
    <property type="entry name" value="PRK09480.1"/>
    <property type="match status" value="1"/>
</dbReference>
<dbReference type="PANTHER" id="PTHR43479">
    <property type="entry name" value="ACREF/ENVCD OPERON REPRESSOR-RELATED"/>
    <property type="match status" value="1"/>
</dbReference>
<dbReference type="PANTHER" id="PTHR43479:SF11">
    <property type="entry name" value="ACREF_ENVCD OPERON REPRESSOR-RELATED"/>
    <property type="match status" value="1"/>
</dbReference>
<dbReference type="Pfam" id="PF22276">
    <property type="entry name" value="SlmA-like_C"/>
    <property type="match status" value="1"/>
</dbReference>
<dbReference type="Pfam" id="PF00440">
    <property type="entry name" value="TetR_N"/>
    <property type="match status" value="1"/>
</dbReference>
<dbReference type="SUPFAM" id="SSF46689">
    <property type="entry name" value="Homeodomain-like"/>
    <property type="match status" value="1"/>
</dbReference>
<dbReference type="PROSITE" id="PS01081">
    <property type="entry name" value="HTH_TETR_1"/>
    <property type="match status" value="1"/>
</dbReference>
<dbReference type="PROSITE" id="PS50977">
    <property type="entry name" value="HTH_TETR_2"/>
    <property type="match status" value="1"/>
</dbReference>
<comment type="function">
    <text evidence="1">Required for nucleoid occlusion (NO) phenomenon, which prevents Z-ring formation and cell division over the nucleoid. Acts as a DNA-associated cell division inhibitor that binds simultaneously chromosomal DNA and FtsZ, and disrupts the assembly of FtsZ polymers. SlmA-DNA-binding sequences (SBS) are dispersed on non-Ter regions of the chromosome, preventing FtsZ polymerization at these regions.</text>
</comment>
<comment type="subunit">
    <text evidence="1">Homodimer. Interacts with FtsZ.</text>
</comment>
<comment type="subcellular location">
    <subcellularLocation>
        <location evidence="1">Cytoplasm</location>
        <location evidence="1">Nucleoid</location>
    </subcellularLocation>
</comment>
<comment type="similarity">
    <text evidence="1">Belongs to the nucleoid occlusion factor SlmA family.</text>
</comment>
<proteinExistence type="inferred from homology"/>
<feature type="chain" id="PRO_1000188376" description="Nucleoid occlusion factor SlmA">
    <location>
        <begin position="1"/>
        <end position="202"/>
    </location>
</feature>
<feature type="domain" description="HTH tetR-type" evidence="1">
    <location>
        <begin position="14"/>
        <end position="75"/>
    </location>
</feature>
<feature type="DNA-binding region" description="H-T-H motif" evidence="1">
    <location>
        <begin position="38"/>
        <end position="57"/>
    </location>
</feature>
<sequence length="202" mass="23307">MIQPTVKMPKKSVKERQQQVLEVLIGLLNSEDGMQRVTTERLAKAVGVSEGALYRYFPSKTKMFEALIERIEQTLTGYINASKRKENTTASTVKAILYTVIEFARKNPGVTRILTGHALMFEDDQLKARVAKFFDGLEFQFANILQMSKLREGKTFEDERALAGYLVNFCEGQFLRLVRSNFSYNQHQHFEKQWALIKPLFE</sequence>
<protein>
    <recommendedName>
        <fullName evidence="1">Nucleoid occlusion factor SlmA</fullName>
    </recommendedName>
</protein>
<keyword id="KW-0131">Cell cycle</keyword>
<keyword id="KW-0132">Cell division</keyword>
<keyword id="KW-0963">Cytoplasm</keyword>
<keyword id="KW-0238">DNA-binding</keyword>
<name>SLMA_ACTP7</name>
<gene>
    <name evidence="1" type="primary">slmA</name>
    <name type="ordered locus">APP7_2055</name>
</gene>
<evidence type="ECO:0000255" key="1">
    <source>
        <dbReference type="HAMAP-Rule" id="MF_01839"/>
    </source>
</evidence>
<organism>
    <name type="scientific">Actinobacillus pleuropneumoniae serotype 7 (strain AP76)</name>
    <dbReference type="NCBI Taxonomy" id="537457"/>
    <lineage>
        <taxon>Bacteria</taxon>
        <taxon>Pseudomonadati</taxon>
        <taxon>Pseudomonadota</taxon>
        <taxon>Gammaproteobacteria</taxon>
        <taxon>Pasteurellales</taxon>
        <taxon>Pasteurellaceae</taxon>
        <taxon>Actinobacillus</taxon>
    </lineage>
</organism>